<accession>Q0HKV8</accession>
<evidence type="ECO:0000255" key="1">
    <source>
        <dbReference type="HAMAP-Rule" id="MF_00127"/>
    </source>
</evidence>
<organism>
    <name type="scientific">Shewanella sp. (strain MR-4)</name>
    <dbReference type="NCBI Taxonomy" id="60480"/>
    <lineage>
        <taxon>Bacteria</taxon>
        <taxon>Pseudomonadati</taxon>
        <taxon>Pseudomonadota</taxon>
        <taxon>Gammaproteobacteria</taxon>
        <taxon>Alteromonadales</taxon>
        <taxon>Shewanellaceae</taxon>
        <taxon>Shewanella</taxon>
    </lineage>
</organism>
<keyword id="KW-0030">Aminoacyl-tRNA synthetase</keyword>
<keyword id="KW-0067">ATP-binding</keyword>
<keyword id="KW-0963">Cytoplasm</keyword>
<keyword id="KW-0436">Ligase</keyword>
<keyword id="KW-0547">Nucleotide-binding</keyword>
<keyword id="KW-0648">Protein biosynthesis</keyword>
<dbReference type="EC" id="6.1.1.21" evidence="1"/>
<dbReference type="EMBL" id="CP000446">
    <property type="protein sequence ID" value="ABI38309.1"/>
    <property type="molecule type" value="Genomic_DNA"/>
</dbReference>
<dbReference type="RefSeq" id="WP_011622017.1">
    <property type="nucleotide sequence ID" value="NC_008321.1"/>
</dbReference>
<dbReference type="SMR" id="Q0HKV8"/>
<dbReference type="KEGG" id="she:Shewmr4_1229"/>
<dbReference type="HOGENOM" id="CLU_025113_1_1_6"/>
<dbReference type="GO" id="GO:0005737">
    <property type="term" value="C:cytoplasm"/>
    <property type="evidence" value="ECO:0007669"/>
    <property type="project" value="UniProtKB-SubCell"/>
</dbReference>
<dbReference type="GO" id="GO:0005524">
    <property type="term" value="F:ATP binding"/>
    <property type="evidence" value="ECO:0007669"/>
    <property type="project" value="UniProtKB-UniRule"/>
</dbReference>
<dbReference type="GO" id="GO:0004821">
    <property type="term" value="F:histidine-tRNA ligase activity"/>
    <property type="evidence" value="ECO:0007669"/>
    <property type="project" value="UniProtKB-UniRule"/>
</dbReference>
<dbReference type="GO" id="GO:0006427">
    <property type="term" value="P:histidyl-tRNA aminoacylation"/>
    <property type="evidence" value="ECO:0007669"/>
    <property type="project" value="UniProtKB-UniRule"/>
</dbReference>
<dbReference type="CDD" id="cd00773">
    <property type="entry name" value="HisRS-like_core"/>
    <property type="match status" value="1"/>
</dbReference>
<dbReference type="CDD" id="cd00859">
    <property type="entry name" value="HisRS_anticodon"/>
    <property type="match status" value="1"/>
</dbReference>
<dbReference type="FunFam" id="3.30.930.10:FF:000005">
    <property type="entry name" value="Histidine--tRNA ligase"/>
    <property type="match status" value="1"/>
</dbReference>
<dbReference type="Gene3D" id="3.40.50.800">
    <property type="entry name" value="Anticodon-binding domain"/>
    <property type="match status" value="1"/>
</dbReference>
<dbReference type="Gene3D" id="3.30.930.10">
    <property type="entry name" value="Bira Bifunctional Protein, Domain 2"/>
    <property type="match status" value="1"/>
</dbReference>
<dbReference type="HAMAP" id="MF_00127">
    <property type="entry name" value="His_tRNA_synth"/>
    <property type="match status" value="1"/>
</dbReference>
<dbReference type="InterPro" id="IPR006195">
    <property type="entry name" value="aa-tRNA-synth_II"/>
</dbReference>
<dbReference type="InterPro" id="IPR045864">
    <property type="entry name" value="aa-tRNA-synth_II/BPL/LPL"/>
</dbReference>
<dbReference type="InterPro" id="IPR004154">
    <property type="entry name" value="Anticodon-bd"/>
</dbReference>
<dbReference type="InterPro" id="IPR036621">
    <property type="entry name" value="Anticodon-bd_dom_sf"/>
</dbReference>
<dbReference type="InterPro" id="IPR015807">
    <property type="entry name" value="His-tRNA-ligase"/>
</dbReference>
<dbReference type="InterPro" id="IPR041715">
    <property type="entry name" value="HisRS-like_core"/>
</dbReference>
<dbReference type="InterPro" id="IPR004516">
    <property type="entry name" value="HisRS/HisZ"/>
</dbReference>
<dbReference type="InterPro" id="IPR033656">
    <property type="entry name" value="HisRS_anticodon"/>
</dbReference>
<dbReference type="NCBIfam" id="TIGR00442">
    <property type="entry name" value="hisS"/>
    <property type="match status" value="1"/>
</dbReference>
<dbReference type="PANTHER" id="PTHR43707:SF1">
    <property type="entry name" value="HISTIDINE--TRNA LIGASE, MITOCHONDRIAL-RELATED"/>
    <property type="match status" value="1"/>
</dbReference>
<dbReference type="PANTHER" id="PTHR43707">
    <property type="entry name" value="HISTIDYL-TRNA SYNTHETASE"/>
    <property type="match status" value="1"/>
</dbReference>
<dbReference type="Pfam" id="PF03129">
    <property type="entry name" value="HGTP_anticodon"/>
    <property type="match status" value="1"/>
</dbReference>
<dbReference type="Pfam" id="PF13393">
    <property type="entry name" value="tRNA-synt_His"/>
    <property type="match status" value="1"/>
</dbReference>
<dbReference type="PIRSF" id="PIRSF001549">
    <property type="entry name" value="His-tRNA_synth"/>
    <property type="match status" value="1"/>
</dbReference>
<dbReference type="SUPFAM" id="SSF52954">
    <property type="entry name" value="Class II aaRS ABD-related"/>
    <property type="match status" value="1"/>
</dbReference>
<dbReference type="SUPFAM" id="SSF55681">
    <property type="entry name" value="Class II aaRS and biotin synthetases"/>
    <property type="match status" value="1"/>
</dbReference>
<dbReference type="PROSITE" id="PS50862">
    <property type="entry name" value="AA_TRNA_LIGASE_II"/>
    <property type="match status" value="1"/>
</dbReference>
<feature type="chain" id="PRO_1000016450" description="Histidine--tRNA ligase">
    <location>
        <begin position="1"/>
        <end position="425"/>
    </location>
</feature>
<protein>
    <recommendedName>
        <fullName evidence="1">Histidine--tRNA ligase</fullName>
        <ecNumber evidence="1">6.1.1.21</ecNumber>
    </recommendedName>
    <alternativeName>
        <fullName evidence="1">Histidyl-tRNA synthetase</fullName>
        <shortName evidence="1">HisRS</shortName>
    </alternativeName>
</protein>
<sequence length="425" mass="47481">MAKQIQAIRGMNDILPTQSPLWQKVEAVLRASVAAYGYSEIRTPIVENTDLFKRSIGEVTDIVEKEMYTFEDRNGDSLTLRPEGTASTVRAGNEHGLLYNQEQRLWYMGPMFRHERPQKGRYRQFHQFGVEVYGIGSADIDAEVLMLSARLWEKLGISEHVTLELNTLGDPAERAAYREALIAFLEQHKDKLDEDSQRRMYSNPLRVLDSKDPQVQSILGDAPALMDYLGEESSQHFAQLRELLDAVGIQYRVNPRLVRGLDYYNRTVFEWVTNSLGSQGTVLAGGRYDGLVAQLGGKDTPAVGFAMGLERIVLLLETLELTQDIPAAVDVYVAAMGDSCLVEAIKVAQELRSTLPTLRVMSHCGGGNFKKQIKRADKSGAQVALLIGEEELAEGVVTVKYLRNDNEQQRVARNALSAFLAELTK</sequence>
<name>SYH_SHESM</name>
<gene>
    <name evidence="1" type="primary">hisS</name>
    <name type="ordered locus">Shewmr4_1229</name>
</gene>
<comment type="catalytic activity">
    <reaction evidence="1">
        <text>tRNA(His) + L-histidine + ATP = L-histidyl-tRNA(His) + AMP + diphosphate + H(+)</text>
        <dbReference type="Rhea" id="RHEA:17313"/>
        <dbReference type="Rhea" id="RHEA-COMP:9665"/>
        <dbReference type="Rhea" id="RHEA-COMP:9689"/>
        <dbReference type="ChEBI" id="CHEBI:15378"/>
        <dbReference type="ChEBI" id="CHEBI:30616"/>
        <dbReference type="ChEBI" id="CHEBI:33019"/>
        <dbReference type="ChEBI" id="CHEBI:57595"/>
        <dbReference type="ChEBI" id="CHEBI:78442"/>
        <dbReference type="ChEBI" id="CHEBI:78527"/>
        <dbReference type="ChEBI" id="CHEBI:456215"/>
        <dbReference type="EC" id="6.1.1.21"/>
    </reaction>
</comment>
<comment type="subunit">
    <text evidence="1">Homodimer.</text>
</comment>
<comment type="subcellular location">
    <subcellularLocation>
        <location evidence="1">Cytoplasm</location>
    </subcellularLocation>
</comment>
<comment type="similarity">
    <text evidence="1">Belongs to the class-II aminoacyl-tRNA synthetase family.</text>
</comment>
<reference key="1">
    <citation type="submission" date="2006-08" db="EMBL/GenBank/DDBJ databases">
        <title>Complete sequence of Shewanella sp. MR-4.</title>
        <authorList>
            <consortium name="US DOE Joint Genome Institute"/>
            <person name="Copeland A."/>
            <person name="Lucas S."/>
            <person name="Lapidus A."/>
            <person name="Barry K."/>
            <person name="Detter J.C."/>
            <person name="Glavina del Rio T."/>
            <person name="Hammon N."/>
            <person name="Israni S."/>
            <person name="Dalin E."/>
            <person name="Tice H."/>
            <person name="Pitluck S."/>
            <person name="Kiss H."/>
            <person name="Brettin T."/>
            <person name="Bruce D."/>
            <person name="Han C."/>
            <person name="Tapia R."/>
            <person name="Gilna P."/>
            <person name="Schmutz J."/>
            <person name="Larimer F."/>
            <person name="Land M."/>
            <person name="Hauser L."/>
            <person name="Kyrpides N."/>
            <person name="Mikhailova N."/>
            <person name="Nealson K."/>
            <person name="Konstantinidis K."/>
            <person name="Klappenbach J."/>
            <person name="Tiedje J."/>
            <person name="Richardson P."/>
        </authorList>
    </citation>
    <scope>NUCLEOTIDE SEQUENCE [LARGE SCALE GENOMIC DNA]</scope>
    <source>
        <strain>MR-4</strain>
    </source>
</reference>
<proteinExistence type="inferred from homology"/>